<reference key="1">
    <citation type="journal article" date="2001" name="Lancet">
        <title>Whole genome sequencing of meticillin-resistant Staphylococcus aureus.</title>
        <authorList>
            <person name="Kuroda M."/>
            <person name="Ohta T."/>
            <person name="Uchiyama I."/>
            <person name="Baba T."/>
            <person name="Yuzawa H."/>
            <person name="Kobayashi I."/>
            <person name="Cui L."/>
            <person name="Oguchi A."/>
            <person name="Aoki K."/>
            <person name="Nagai Y."/>
            <person name="Lian J.-Q."/>
            <person name="Ito T."/>
            <person name="Kanamori M."/>
            <person name="Matsumaru H."/>
            <person name="Maruyama A."/>
            <person name="Murakami H."/>
            <person name="Hosoyama A."/>
            <person name="Mizutani-Ui Y."/>
            <person name="Takahashi N.K."/>
            <person name="Sawano T."/>
            <person name="Inoue R."/>
            <person name="Kaito C."/>
            <person name="Sekimizu K."/>
            <person name="Hirakawa H."/>
            <person name="Kuhara S."/>
            <person name="Goto S."/>
            <person name="Yabuzaki J."/>
            <person name="Kanehisa M."/>
            <person name="Yamashita A."/>
            <person name="Oshima K."/>
            <person name="Furuya K."/>
            <person name="Yoshino C."/>
            <person name="Shiba T."/>
            <person name="Hattori M."/>
            <person name="Ogasawara N."/>
            <person name="Hayashi H."/>
            <person name="Hiramatsu K."/>
        </authorList>
    </citation>
    <scope>NUCLEOTIDE SEQUENCE [LARGE SCALE GENOMIC DNA]</scope>
    <source>
        <strain>N315</strain>
    </source>
</reference>
<reference key="2">
    <citation type="submission" date="2005-11" db="UniProtKB">
        <title>Shotgun proteomic analysis of total protein extract of S. aureus S30 versus N315.</title>
        <authorList>
            <person name="Stenz L."/>
        </authorList>
    </citation>
    <scope>IDENTIFICATION BY MASS SPECTROMETRY</scope>
</reference>
<reference key="3">
    <citation type="submission" date="2007-10" db="UniProtKB">
        <title>Shotgun proteomic analysis of total and membrane protein extracts of S. aureus strain N315.</title>
        <authorList>
            <person name="Vaezzadeh A.R."/>
            <person name="Deshusses J."/>
            <person name="Lescuyer P."/>
            <person name="Hochstrasser D.F."/>
        </authorList>
    </citation>
    <scope>IDENTIFICATION BY MASS SPECTROMETRY [LARGE SCALE ANALYSIS]</scope>
    <source>
        <strain>N315</strain>
    </source>
</reference>
<comment type="function">
    <text evidence="1">Catalyzes the interconversion of 2-phosphoglycerate and 3-phosphoglycerate.</text>
</comment>
<comment type="catalytic activity">
    <reaction evidence="1">
        <text>(2R)-2-phosphoglycerate = (2R)-3-phosphoglycerate</text>
        <dbReference type="Rhea" id="RHEA:15901"/>
        <dbReference type="ChEBI" id="CHEBI:58272"/>
        <dbReference type="ChEBI" id="CHEBI:58289"/>
        <dbReference type="EC" id="5.4.2.12"/>
    </reaction>
</comment>
<comment type="cofactor">
    <cofactor evidence="1">
        <name>Mn(2+)</name>
        <dbReference type="ChEBI" id="CHEBI:29035"/>
    </cofactor>
    <text evidence="1">Binds 2 manganese ions per subunit.</text>
</comment>
<comment type="pathway">
    <text evidence="1">Carbohydrate degradation; glycolysis; pyruvate from D-glyceraldehyde 3-phosphate: step 3/5.</text>
</comment>
<comment type="subunit">
    <text evidence="1">Monomer.</text>
</comment>
<comment type="similarity">
    <text evidence="1">Belongs to the BPG-independent phosphoglycerate mutase family.</text>
</comment>
<protein>
    <recommendedName>
        <fullName evidence="1">2,3-bisphosphoglycerate-independent phosphoglycerate mutase</fullName>
        <shortName evidence="1">BPG-independent PGAM</shortName>
        <shortName evidence="1">Phosphoglyceromutase</shortName>
        <shortName evidence="1">iPGM</shortName>
        <ecNumber evidence="1">5.4.2.12</ecNumber>
    </recommendedName>
</protein>
<sequence length="505" mass="56454">MAKKPTALIILDGFANRESEHGNAVKLANKPNFDRYYNKYPTTQIEASGLDVGLPEGQMGNSEVGHMNIGAGRIVYQSLTRINKSIEDGDFFENDVLNNAIAHVNSHDSALHIFGLLSDGGVHSHYKHLFALLELAKKQGVEKVYVHAFLDGRDVDQKSALKYIEETEAKFNELGIGQFASVSGRYYAMDRDKRWEREEKAYNAIRNFDAPTYATAKEGVEASYNEGLTDEFVVPFIVENQNDGVNDGDTVIFYNFRPDRAAQLSEIFANRAFEGFKVEQVKDLFYATFTKYNDNIDAAIVFEKVDLNNTIGEIAQNNNLTQLRIAETEKYPHVTYFMSGGRNEEFKGERRRLIDSPKVATYDLKPEMSAYEVKDALLEELNKGDLDLIILNFANPDMVGHSGMLEPTIKAIEAVDECLGEVVDKILDMDGYAIITADHGNSDQVLTDDDQPMTTHTTNPVPVIVTKEGVTLRETGRLGDLAPTLLDLLNVEQPEDMTGESLIKH</sequence>
<evidence type="ECO:0000255" key="1">
    <source>
        <dbReference type="HAMAP-Rule" id="MF_01038"/>
    </source>
</evidence>
<feature type="chain" id="PRO_0000212212" description="2,3-bisphosphoglycerate-independent phosphoglycerate mutase">
    <location>
        <begin position="1"/>
        <end position="505"/>
    </location>
</feature>
<feature type="active site" description="Phosphoserine intermediate" evidence="1">
    <location>
        <position position="62"/>
    </location>
</feature>
<feature type="binding site" evidence="1">
    <location>
        <position position="12"/>
    </location>
    <ligand>
        <name>Mn(2+)</name>
        <dbReference type="ChEBI" id="CHEBI:29035"/>
        <label>2</label>
    </ligand>
</feature>
<feature type="binding site" evidence="1">
    <location>
        <position position="62"/>
    </location>
    <ligand>
        <name>Mn(2+)</name>
        <dbReference type="ChEBI" id="CHEBI:29035"/>
        <label>2</label>
    </ligand>
</feature>
<feature type="binding site" evidence="1">
    <location>
        <position position="123"/>
    </location>
    <ligand>
        <name>substrate</name>
    </ligand>
</feature>
<feature type="binding site" evidence="1">
    <location>
        <begin position="153"/>
        <end position="154"/>
    </location>
    <ligand>
        <name>substrate</name>
    </ligand>
</feature>
<feature type="binding site" evidence="1">
    <location>
        <position position="185"/>
    </location>
    <ligand>
        <name>substrate</name>
    </ligand>
</feature>
<feature type="binding site" evidence="1">
    <location>
        <position position="191"/>
    </location>
    <ligand>
        <name>substrate</name>
    </ligand>
</feature>
<feature type="binding site" evidence="1">
    <location>
        <begin position="257"/>
        <end position="260"/>
    </location>
    <ligand>
        <name>substrate</name>
    </ligand>
</feature>
<feature type="binding site" evidence="1">
    <location>
        <position position="330"/>
    </location>
    <ligand>
        <name>substrate</name>
    </ligand>
</feature>
<feature type="binding site" evidence="1">
    <location>
        <position position="397"/>
    </location>
    <ligand>
        <name>Mn(2+)</name>
        <dbReference type="ChEBI" id="CHEBI:29035"/>
        <label>1</label>
    </ligand>
</feature>
<feature type="binding site" evidence="1">
    <location>
        <position position="401"/>
    </location>
    <ligand>
        <name>Mn(2+)</name>
        <dbReference type="ChEBI" id="CHEBI:29035"/>
        <label>1</label>
    </ligand>
</feature>
<feature type="binding site" evidence="1">
    <location>
        <position position="438"/>
    </location>
    <ligand>
        <name>Mn(2+)</name>
        <dbReference type="ChEBI" id="CHEBI:29035"/>
        <label>2</label>
    </ligand>
</feature>
<feature type="binding site" evidence="1">
    <location>
        <position position="439"/>
    </location>
    <ligand>
        <name>Mn(2+)</name>
        <dbReference type="ChEBI" id="CHEBI:29035"/>
        <label>2</label>
    </ligand>
</feature>
<feature type="binding site" evidence="1">
    <location>
        <position position="456"/>
    </location>
    <ligand>
        <name>Mn(2+)</name>
        <dbReference type="ChEBI" id="CHEBI:29035"/>
        <label>1</label>
    </ligand>
</feature>
<organism>
    <name type="scientific">Staphylococcus aureus (strain N315)</name>
    <dbReference type="NCBI Taxonomy" id="158879"/>
    <lineage>
        <taxon>Bacteria</taxon>
        <taxon>Bacillati</taxon>
        <taxon>Bacillota</taxon>
        <taxon>Bacilli</taxon>
        <taxon>Bacillales</taxon>
        <taxon>Staphylococcaceae</taxon>
        <taxon>Staphylococcus</taxon>
    </lineage>
</organism>
<keyword id="KW-0324">Glycolysis</keyword>
<keyword id="KW-0413">Isomerase</keyword>
<keyword id="KW-0464">Manganese</keyword>
<keyword id="KW-0479">Metal-binding</keyword>
<dbReference type="EC" id="5.4.2.12" evidence="1"/>
<dbReference type="EMBL" id="BA000018">
    <property type="protein sequence ID" value="BAB41963.1"/>
    <property type="molecule type" value="Genomic_DNA"/>
</dbReference>
<dbReference type="PIR" id="H89850">
    <property type="entry name" value="H89850"/>
</dbReference>
<dbReference type="RefSeq" id="WP_001085507.1">
    <property type="nucleotide sequence ID" value="NC_002745.2"/>
</dbReference>
<dbReference type="SMR" id="P64270"/>
<dbReference type="EnsemblBacteria" id="BAB41963">
    <property type="protein sequence ID" value="BAB41963"/>
    <property type="gene ID" value="BAB41963"/>
</dbReference>
<dbReference type="KEGG" id="sau:SA0730"/>
<dbReference type="HOGENOM" id="CLU_026099_2_0_9"/>
<dbReference type="UniPathway" id="UPA00109">
    <property type="reaction ID" value="UER00186"/>
</dbReference>
<dbReference type="GO" id="GO:0005829">
    <property type="term" value="C:cytosol"/>
    <property type="evidence" value="ECO:0007669"/>
    <property type="project" value="TreeGrafter"/>
</dbReference>
<dbReference type="GO" id="GO:0030145">
    <property type="term" value="F:manganese ion binding"/>
    <property type="evidence" value="ECO:0007669"/>
    <property type="project" value="UniProtKB-UniRule"/>
</dbReference>
<dbReference type="GO" id="GO:0004619">
    <property type="term" value="F:phosphoglycerate mutase activity"/>
    <property type="evidence" value="ECO:0007669"/>
    <property type="project" value="UniProtKB-EC"/>
</dbReference>
<dbReference type="GO" id="GO:0006007">
    <property type="term" value="P:glucose catabolic process"/>
    <property type="evidence" value="ECO:0007669"/>
    <property type="project" value="InterPro"/>
</dbReference>
<dbReference type="GO" id="GO:0006096">
    <property type="term" value="P:glycolytic process"/>
    <property type="evidence" value="ECO:0007669"/>
    <property type="project" value="UniProtKB-UniRule"/>
</dbReference>
<dbReference type="CDD" id="cd16010">
    <property type="entry name" value="iPGM"/>
    <property type="match status" value="1"/>
</dbReference>
<dbReference type="FunFam" id="3.40.1450.10:FF:000001">
    <property type="entry name" value="2,3-bisphosphoglycerate-independent phosphoglycerate mutase"/>
    <property type="match status" value="1"/>
</dbReference>
<dbReference type="FunFam" id="3.40.720.10:FF:000001">
    <property type="entry name" value="2,3-bisphosphoglycerate-independent phosphoglycerate mutase"/>
    <property type="match status" value="1"/>
</dbReference>
<dbReference type="Gene3D" id="3.40.720.10">
    <property type="entry name" value="Alkaline Phosphatase, subunit A"/>
    <property type="match status" value="1"/>
</dbReference>
<dbReference type="Gene3D" id="3.40.1450.10">
    <property type="entry name" value="BPG-independent phosphoglycerate mutase, domain B"/>
    <property type="match status" value="1"/>
</dbReference>
<dbReference type="HAMAP" id="MF_01038">
    <property type="entry name" value="GpmI"/>
    <property type="match status" value="1"/>
</dbReference>
<dbReference type="InterPro" id="IPR017850">
    <property type="entry name" value="Alkaline_phosphatase_core_sf"/>
</dbReference>
<dbReference type="InterPro" id="IPR011258">
    <property type="entry name" value="BPG-indep_PGM_N"/>
</dbReference>
<dbReference type="InterPro" id="IPR006124">
    <property type="entry name" value="Metalloenzyme"/>
</dbReference>
<dbReference type="InterPro" id="IPR036646">
    <property type="entry name" value="PGAM_B_sf"/>
</dbReference>
<dbReference type="InterPro" id="IPR005995">
    <property type="entry name" value="Pgm_bpd_ind"/>
</dbReference>
<dbReference type="NCBIfam" id="TIGR01307">
    <property type="entry name" value="pgm_bpd_ind"/>
    <property type="match status" value="1"/>
</dbReference>
<dbReference type="PANTHER" id="PTHR31637">
    <property type="entry name" value="2,3-BISPHOSPHOGLYCERATE-INDEPENDENT PHOSPHOGLYCERATE MUTASE"/>
    <property type="match status" value="1"/>
</dbReference>
<dbReference type="PANTHER" id="PTHR31637:SF0">
    <property type="entry name" value="2,3-BISPHOSPHOGLYCERATE-INDEPENDENT PHOSPHOGLYCERATE MUTASE"/>
    <property type="match status" value="1"/>
</dbReference>
<dbReference type="Pfam" id="PF06415">
    <property type="entry name" value="iPGM_N"/>
    <property type="match status" value="1"/>
</dbReference>
<dbReference type="Pfam" id="PF01676">
    <property type="entry name" value="Metalloenzyme"/>
    <property type="match status" value="1"/>
</dbReference>
<dbReference type="PIRSF" id="PIRSF001492">
    <property type="entry name" value="IPGAM"/>
    <property type="match status" value="1"/>
</dbReference>
<dbReference type="SUPFAM" id="SSF64158">
    <property type="entry name" value="2,3-Bisphosphoglycerate-independent phosphoglycerate mutase, substrate-binding domain"/>
    <property type="match status" value="1"/>
</dbReference>
<dbReference type="SUPFAM" id="SSF53649">
    <property type="entry name" value="Alkaline phosphatase-like"/>
    <property type="match status" value="1"/>
</dbReference>
<gene>
    <name evidence="1" type="primary">gpmI</name>
    <name type="synonym">pgm</name>
    <name type="ordered locus">SA0730</name>
</gene>
<name>GPMI_STAAN</name>
<accession>P64270</accession>
<accession>Q99VK6</accession>
<proteinExistence type="evidence at protein level"/>